<gene>
    <name evidence="1" type="primary">rpmD</name>
    <name type="ordered locus">EC55989_3718</name>
</gene>
<organism>
    <name type="scientific">Escherichia coli (strain 55989 / EAEC)</name>
    <dbReference type="NCBI Taxonomy" id="585055"/>
    <lineage>
        <taxon>Bacteria</taxon>
        <taxon>Pseudomonadati</taxon>
        <taxon>Pseudomonadota</taxon>
        <taxon>Gammaproteobacteria</taxon>
        <taxon>Enterobacterales</taxon>
        <taxon>Enterobacteriaceae</taxon>
        <taxon>Escherichia</taxon>
    </lineage>
</organism>
<evidence type="ECO:0000255" key="1">
    <source>
        <dbReference type="HAMAP-Rule" id="MF_01371"/>
    </source>
</evidence>
<evidence type="ECO:0000305" key="2"/>
<dbReference type="EMBL" id="CU928145">
    <property type="protein sequence ID" value="CAV00007.1"/>
    <property type="molecule type" value="Genomic_DNA"/>
</dbReference>
<dbReference type="RefSeq" id="WP_001140433.1">
    <property type="nucleotide sequence ID" value="NZ_CP028304.1"/>
</dbReference>
<dbReference type="SMR" id="B7LI03"/>
<dbReference type="GeneID" id="93778685"/>
<dbReference type="KEGG" id="eck:EC55989_3718"/>
<dbReference type="HOGENOM" id="CLU_131047_1_4_6"/>
<dbReference type="Proteomes" id="UP000000746">
    <property type="component" value="Chromosome"/>
</dbReference>
<dbReference type="GO" id="GO:0022625">
    <property type="term" value="C:cytosolic large ribosomal subunit"/>
    <property type="evidence" value="ECO:0007669"/>
    <property type="project" value="TreeGrafter"/>
</dbReference>
<dbReference type="GO" id="GO:0003735">
    <property type="term" value="F:structural constituent of ribosome"/>
    <property type="evidence" value="ECO:0007669"/>
    <property type="project" value="InterPro"/>
</dbReference>
<dbReference type="GO" id="GO:0006412">
    <property type="term" value="P:translation"/>
    <property type="evidence" value="ECO:0007669"/>
    <property type="project" value="UniProtKB-UniRule"/>
</dbReference>
<dbReference type="CDD" id="cd01658">
    <property type="entry name" value="Ribosomal_L30"/>
    <property type="match status" value="1"/>
</dbReference>
<dbReference type="FunFam" id="3.30.1390.20:FF:000001">
    <property type="entry name" value="50S ribosomal protein L30"/>
    <property type="match status" value="1"/>
</dbReference>
<dbReference type="Gene3D" id="3.30.1390.20">
    <property type="entry name" value="Ribosomal protein L30, ferredoxin-like fold domain"/>
    <property type="match status" value="1"/>
</dbReference>
<dbReference type="HAMAP" id="MF_01371_B">
    <property type="entry name" value="Ribosomal_uL30_B"/>
    <property type="match status" value="1"/>
</dbReference>
<dbReference type="InterPro" id="IPR036919">
    <property type="entry name" value="Ribo_uL30_ferredoxin-like_sf"/>
</dbReference>
<dbReference type="InterPro" id="IPR005996">
    <property type="entry name" value="Ribosomal_uL30_bac-type"/>
</dbReference>
<dbReference type="InterPro" id="IPR018038">
    <property type="entry name" value="Ribosomal_uL30_CS"/>
</dbReference>
<dbReference type="InterPro" id="IPR016082">
    <property type="entry name" value="Ribosomal_uL30_ferredoxin-like"/>
</dbReference>
<dbReference type="NCBIfam" id="TIGR01308">
    <property type="entry name" value="rpmD_bact"/>
    <property type="match status" value="1"/>
</dbReference>
<dbReference type="PANTHER" id="PTHR15892:SF2">
    <property type="entry name" value="LARGE RIBOSOMAL SUBUNIT PROTEIN UL30M"/>
    <property type="match status" value="1"/>
</dbReference>
<dbReference type="PANTHER" id="PTHR15892">
    <property type="entry name" value="MITOCHONDRIAL RIBOSOMAL PROTEIN L30"/>
    <property type="match status" value="1"/>
</dbReference>
<dbReference type="Pfam" id="PF00327">
    <property type="entry name" value="Ribosomal_L30"/>
    <property type="match status" value="1"/>
</dbReference>
<dbReference type="PIRSF" id="PIRSF002211">
    <property type="entry name" value="Ribosomal_L30_bac-type"/>
    <property type="match status" value="1"/>
</dbReference>
<dbReference type="SUPFAM" id="SSF55129">
    <property type="entry name" value="Ribosomal protein L30p/L7e"/>
    <property type="match status" value="1"/>
</dbReference>
<dbReference type="PROSITE" id="PS00634">
    <property type="entry name" value="RIBOSOMAL_L30"/>
    <property type="match status" value="1"/>
</dbReference>
<comment type="subunit">
    <text evidence="1">Part of the 50S ribosomal subunit.</text>
</comment>
<comment type="similarity">
    <text evidence="1">Belongs to the universal ribosomal protein uL30 family.</text>
</comment>
<keyword id="KW-1185">Reference proteome</keyword>
<keyword id="KW-0687">Ribonucleoprotein</keyword>
<keyword id="KW-0689">Ribosomal protein</keyword>
<reference key="1">
    <citation type="journal article" date="2009" name="PLoS Genet.">
        <title>Organised genome dynamics in the Escherichia coli species results in highly diverse adaptive paths.</title>
        <authorList>
            <person name="Touchon M."/>
            <person name="Hoede C."/>
            <person name="Tenaillon O."/>
            <person name="Barbe V."/>
            <person name="Baeriswyl S."/>
            <person name="Bidet P."/>
            <person name="Bingen E."/>
            <person name="Bonacorsi S."/>
            <person name="Bouchier C."/>
            <person name="Bouvet O."/>
            <person name="Calteau A."/>
            <person name="Chiapello H."/>
            <person name="Clermont O."/>
            <person name="Cruveiller S."/>
            <person name="Danchin A."/>
            <person name="Diard M."/>
            <person name="Dossat C."/>
            <person name="Karoui M.E."/>
            <person name="Frapy E."/>
            <person name="Garry L."/>
            <person name="Ghigo J.M."/>
            <person name="Gilles A.M."/>
            <person name="Johnson J."/>
            <person name="Le Bouguenec C."/>
            <person name="Lescat M."/>
            <person name="Mangenot S."/>
            <person name="Martinez-Jehanne V."/>
            <person name="Matic I."/>
            <person name="Nassif X."/>
            <person name="Oztas S."/>
            <person name="Petit M.A."/>
            <person name="Pichon C."/>
            <person name="Rouy Z."/>
            <person name="Ruf C.S."/>
            <person name="Schneider D."/>
            <person name="Tourret J."/>
            <person name="Vacherie B."/>
            <person name="Vallenet D."/>
            <person name="Medigue C."/>
            <person name="Rocha E.P.C."/>
            <person name="Denamur E."/>
        </authorList>
    </citation>
    <scope>NUCLEOTIDE SEQUENCE [LARGE SCALE GENOMIC DNA]</scope>
    <source>
        <strain>55989 / EAEC</strain>
    </source>
</reference>
<accession>B7LI03</accession>
<proteinExistence type="inferred from homology"/>
<name>RL30_ECO55</name>
<sequence>MAKTIKITQTRSAIGRLPKHKATLLGLGLRRIGHTVEREDTPAIRGMINAVSFMVKVEE</sequence>
<protein>
    <recommendedName>
        <fullName evidence="1">Large ribosomal subunit protein uL30</fullName>
    </recommendedName>
    <alternativeName>
        <fullName evidence="2">50S ribosomal protein L30</fullName>
    </alternativeName>
</protein>
<feature type="chain" id="PRO_1000184143" description="Large ribosomal subunit protein uL30">
    <location>
        <begin position="1"/>
        <end position="59"/>
    </location>
</feature>